<organism>
    <name type="scientific">Streptococcus agalactiae serotype III (strain NEM316)</name>
    <dbReference type="NCBI Taxonomy" id="211110"/>
    <lineage>
        <taxon>Bacteria</taxon>
        <taxon>Bacillati</taxon>
        <taxon>Bacillota</taxon>
        <taxon>Bacilli</taxon>
        <taxon>Lactobacillales</taxon>
        <taxon>Streptococcaceae</taxon>
        <taxon>Streptococcus</taxon>
    </lineage>
</organism>
<proteinExistence type="inferred from homology"/>
<comment type="function">
    <text evidence="1">Part of the ABC transporter complex PstSACB involved in phosphate import. Responsible for energy coupling to the transport system.</text>
</comment>
<comment type="catalytic activity">
    <reaction evidence="1">
        <text>phosphate(out) + ATP + H2O = ADP + 2 phosphate(in) + H(+)</text>
        <dbReference type="Rhea" id="RHEA:24440"/>
        <dbReference type="ChEBI" id="CHEBI:15377"/>
        <dbReference type="ChEBI" id="CHEBI:15378"/>
        <dbReference type="ChEBI" id="CHEBI:30616"/>
        <dbReference type="ChEBI" id="CHEBI:43474"/>
        <dbReference type="ChEBI" id="CHEBI:456216"/>
        <dbReference type="EC" id="7.3.2.1"/>
    </reaction>
</comment>
<comment type="subunit">
    <text evidence="1">The complex is composed of two ATP-binding proteins (PstB), two transmembrane proteins (PstC and PstA) and a solute-binding protein (PstS).</text>
</comment>
<comment type="subcellular location">
    <subcellularLocation>
        <location evidence="1">Cell membrane</location>
        <topology evidence="1">Peripheral membrane protein</topology>
    </subcellularLocation>
</comment>
<comment type="similarity">
    <text evidence="1">Belongs to the ABC transporter superfamily. Phosphate importer (TC 3.A.1.7) family.</text>
</comment>
<feature type="chain" id="PRO_0000092886" description="Phosphate import ATP-binding protein PstB 1">
    <location>
        <begin position="1"/>
        <end position="252"/>
    </location>
</feature>
<feature type="domain" description="ABC transporter" evidence="1">
    <location>
        <begin position="6"/>
        <end position="247"/>
    </location>
</feature>
<feature type="binding site" evidence="1">
    <location>
        <begin position="38"/>
        <end position="45"/>
    </location>
    <ligand>
        <name>ATP</name>
        <dbReference type="ChEBI" id="CHEBI:30616"/>
    </ligand>
</feature>
<protein>
    <recommendedName>
        <fullName evidence="1">Phosphate import ATP-binding protein PstB 1</fullName>
        <ecNumber evidence="1">7.3.2.1</ecNumber>
    </recommendedName>
    <alternativeName>
        <fullName evidence="1">ABC phosphate transporter 1</fullName>
    </alternativeName>
    <alternativeName>
        <fullName evidence="1">Phosphate-transporting ATPase 1</fullName>
    </alternativeName>
</protein>
<gene>
    <name evidence="1" type="primary">pstB1</name>
    <name type="ordered locus">gbs1023</name>
</gene>
<reference key="1">
    <citation type="journal article" date="2002" name="Mol. Microbiol.">
        <title>Genome sequence of Streptococcus agalactiae, a pathogen causing invasive neonatal disease.</title>
        <authorList>
            <person name="Glaser P."/>
            <person name="Rusniok C."/>
            <person name="Buchrieser C."/>
            <person name="Chevalier F."/>
            <person name="Frangeul L."/>
            <person name="Msadek T."/>
            <person name="Zouine M."/>
            <person name="Couve E."/>
            <person name="Lalioui L."/>
            <person name="Poyart C."/>
            <person name="Trieu-Cuot P."/>
            <person name="Kunst F."/>
        </authorList>
    </citation>
    <scope>NUCLEOTIDE SEQUENCE [LARGE SCALE GENOMIC DNA]</scope>
    <source>
        <strain>NEM316</strain>
    </source>
</reference>
<keyword id="KW-0067">ATP-binding</keyword>
<keyword id="KW-1003">Cell membrane</keyword>
<keyword id="KW-0472">Membrane</keyword>
<keyword id="KW-0547">Nucleotide-binding</keyword>
<keyword id="KW-0592">Phosphate transport</keyword>
<keyword id="KW-1278">Translocase</keyword>
<keyword id="KW-0813">Transport</keyword>
<name>PSTB1_STRA3</name>
<dbReference type="EC" id="7.3.2.1" evidence="1"/>
<dbReference type="EMBL" id="AL766848">
    <property type="protein sequence ID" value="CAD46682.1"/>
    <property type="molecule type" value="Genomic_DNA"/>
</dbReference>
<dbReference type="SMR" id="P63367"/>
<dbReference type="KEGG" id="san:gbs1023"/>
<dbReference type="eggNOG" id="COG1117">
    <property type="taxonomic scope" value="Bacteria"/>
</dbReference>
<dbReference type="HOGENOM" id="CLU_000604_1_22_9"/>
<dbReference type="Proteomes" id="UP000000823">
    <property type="component" value="Chromosome"/>
</dbReference>
<dbReference type="GO" id="GO:0005886">
    <property type="term" value="C:plasma membrane"/>
    <property type="evidence" value="ECO:0007669"/>
    <property type="project" value="UniProtKB-SubCell"/>
</dbReference>
<dbReference type="GO" id="GO:0005524">
    <property type="term" value="F:ATP binding"/>
    <property type="evidence" value="ECO:0007669"/>
    <property type="project" value="UniProtKB-KW"/>
</dbReference>
<dbReference type="GO" id="GO:0016887">
    <property type="term" value="F:ATP hydrolysis activity"/>
    <property type="evidence" value="ECO:0007669"/>
    <property type="project" value="InterPro"/>
</dbReference>
<dbReference type="GO" id="GO:0015415">
    <property type="term" value="F:ATPase-coupled phosphate ion transmembrane transporter activity"/>
    <property type="evidence" value="ECO:0007669"/>
    <property type="project" value="UniProtKB-EC"/>
</dbReference>
<dbReference type="GO" id="GO:0035435">
    <property type="term" value="P:phosphate ion transmembrane transport"/>
    <property type="evidence" value="ECO:0007669"/>
    <property type="project" value="InterPro"/>
</dbReference>
<dbReference type="CDD" id="cd03260">
    <property type="entry name" value="ABC_PstB_phosphate_transporter"/>
    <property type="match status" value="1"/>
</dbReference>
<dbReference type="Gene3D" id="3.40.50.300">
    <property type="entry name" value="P-loop containing nucleotide triphosphate hydrolases"/>
    <property type="match status" value="1"/>
</dbReference>
<dbReference type="InterPro" id="IPR003593">
    <property type="entry name" value="AAA+_ATPase"/>
</dbReference>
<dbReference type="InterPro" id="IPR003439">
    <property type="entry name" value="ABC_transporter-like_ATP-bd"/>
</dbReference>
<dbReference type="InterPro" id="IPR017871">
    <property type="entry name" value="ABC_transporter-like_CS"/>
</dbReference>
<dbReference type="InterPro" id="IPR027417">
    <property type="entry name" value="P-loop_NTPase"/>
</dbReference>
<dbReference type="InterPro" id="IPR005670">
    <property type="entry name" value="PstB-like"/>
</dbReference>
<dbReference type="NCBIfam" id="TIGR00972">
    <property type="entry name" value="3a0107s01c2"/>
    <property type="match status" value="1"/>
</dbReference>
<dbReference type="PANTHER" id="PTHR43423">
    <property type="entry name" value="ABC TRANSPORTER I FAMILY MEMBER 17"/>
    <property type="match status" value="1"/>
</dbReference>
<dbReference type="PANTHER" id="PTHR43423:SF1">
    <property type="entry name" value="ABC TRANSPORTER I FAMILY MEMBER 17"/>
    <property type="match status" value="1"/>
</dbReference>
<dbReference type="Pfam" id="PF00005">
    <property type="entry name" value="ABC_tran"/>
    <property type="match status" value="1"/>
</dbReference>
<dbReference type="SMART" id="SM00382">
    <property type="entry name" value="AAA"/>
    <property type="match status" value="1"/>
</dbReference>
<dbReference type="SUPFAM" id="SSF52540">
    <property type="entry name" value="P-loop containing nucleoside triphosphate hydrolases"/>
    <property type="match status" value="1"/>
</dbReference>
<dbReference type="PROSITE" id="PS00211">
    <property type="entry name" value="ABC_TRANSPORTER_1"/>
    <property type="match status" value="1"/>
</dbReference>
<dbReference type="PROSITE" id="PS50893">
    <property type="entry name" value="ABC_TRANSPORTER_2"/>
    <property type="match status" value="1"/>
</dbReference>
<dbReference type="PROSITE" id="PS51238">
    <property type="entry name" value="PSTB"/>
    <property type="match status" value="1"/>
</dbReference>
<sequence>MTQPILQVSDLSVYYNKKKALKEVSMDFYPNEITALIGPSGSGKSTLLRAINRMGDLNPEVTLTGAVMYNGHNVYSPRTDTVELRKEIGMVFQQPNPFPMSVFENVVYGLRLKGIKDKATLDEAVETSLKGASIWDEVKDRLHDSALGLSGGQQQRVCIARTLATKPKIILLDEPTSALDPISAGKIEETLHGLKDQYTMLLVTRSMQQASRISDRTGFFLDGNLIEYGNTKEMFMNPKHKETEDYITGKFG</sequence>
<evidence type="ECO:0000255" key="1">
    <source>
        <dbReference type="HAMAP-Rule" id="MF_01702"/>
    </source>
</evidence>
<accession>P63367</accession>
<accession>Q8DZV8</accession>
<accession>Q8E5K6</accession>